<feature type="chain" id="PRO_0000314552" description="Ribosomal RNA large subunit methyltransferase M">
    <location>
        <begin position="1"/>
        <end position="368"/>
    </location>
</feature>
<feature type="active site" description="Proton acceptor" evidence="1">
    <location>
        <position position="307"/>
    </location>
</feature>
<feature type="binding site" evidence="1">
    <location>
        <position position="189"/>
    </location>
    <ligand>
        <name>S-adenosyl-L-methionine</name>
        <dbReference type="ChEBI" id="CHEBI:59789"/>
    </ligand>
</feature>
<feature type="binding site" evidence="1">
    <location>
        <begin position="222"/>
        <end position="225"/>
    </location>
    <ligand>
        <name>S-adenosyl-L-methionine</name>
        <dbReference type="ChEBI" id="CHEBI:59789"/>
    </ligand>
</feature>
<feature type="binding site" evidence="1">
    <location>
        <position position="241"/>
    </location>
    <ligand>
        <name>S-adenosyl-L-methionine</name>
        <dbReference type="ChEBI" id="CHEBI:59789"/>
    </ligand>
</feature>
<feature type="binding site" evidence="1">
    <location>
        <position position="261"/>
    </location>
    <ligand>
        <name>S-adenosyl-L-methionine</name>
        <dbReference type="ChEBI" id="CHEBI:59789"/>
    </ligand>
</feature>
<feature type="binding site" evidence="1">
    <location>
        <position position="278"/>
    </location>
    <ligand>
        <name>S-adenosyl-L-methionine</name>
        <dbReference type="ChEBI" id="CHEBI:59789"/>
    </ligand>
</feature>
<reference key="1">
    <citation type="journal article" date="2006" name="J. Bacteriol.">
        <title>Complete genome sequence of Yersinia pestis strains Antiqua and Nepal516: evidence of gene reduction in an emerging pathogen.</title>
        <authorList>
            <person name="Chain P.S.G."/>
            <person name="Hu P."/>
            <person name="Malfatti S.A."/>
            <person name="Radnedge L."/>
            <person name="Larimer F."/>
            <person name="Vergez L.M."/>
            <person name="Worsham P."/>
            <person name="Chu M.C."/>
            <person name="Andersen G.L."/>
        </authorList>
    </citation>
    <scope>NUCLEOTIDE SEQUENCE [LARGE SCALE GENOMIC DNA]</scope>
    <source>
        <strain>Antiqua</strain>
    </source>
</reference>
<gene>
    <name evidence="1" type="primary">rlmM</name>
    <name type="ordered locus">YPA_0502</name>
</gene>
<comment type="function">
    <text evidence="1">Catalyzes the 2'-O-methylation at nucleotide C2498 in 23S rRNA.</text>
</comment>
<comment type="catalytic activity">
    <reaction evidence="1">
        <text>cytidine(2498) in 23S rRNA + S-adenosyl-L-methionine = 2'-O-methylcytidine(2498) in 23S rRNA + S-adenosyl-L-homocysteine + H(+)</text>
        <dbReference type="Rhea" id="RHEA:42788"/>
        <dbReference type="Rhea" id="RHEA-COMP:10244"/>
        <dbReference type="Rhea" id="RHEA-COMP:10245"/>
        <dbReference type="ChEBI" id="CHEBI:15378"/>
        <dbReference type="ChEBI" id="CHEBI:57856"/>
        <dbReference type="ChEBI" id="CHEBI:59789"/>
        <dbReference type="ChEBI" id="CHEBI:74495"/>
        <dbReference type="ChEBI" id="CHEBI:82748"/>
        <dbReference type="EC" id="2.1.1.186"/>
    </reaction>
</comment>
<comment type="subunit">
    <text evidence="1">Monomer.</text>
</comment>
<comment type="subcellular location">
    <subcellularLocation>
        <location evidence="1">Cytoplasm</location>
    </subcellularLocation>
</comment>
<comment type="similarity">
    <text evidence="1">Belongs to the class I-like SAM-binding methyltransferase superfamily. RNA methyltransferase RlmE family. RlmM subfamily.</text>
</comment>
<organism>
    <name type="scientific">Yersinia pestis bv. Antiqua (strain Antiqua)</name>
    <dbReference type="NCBI Taxonomy" id="360102"/>
    <lineage>
        <taxon>Bacteria</taxon>
        <taxon>Pseudomonadati</taxon>
        <taxon>Pseudomonadota</taxon>
        <taxon>Gammaproteobacteria</taxon>
        <taxon>Enterobacterales</taxon>
        <taxon>Yersiniaceae</taxon>
        <taxon>Yersinia</taxon>
    </lineage>
</organism>
<dbReference type="EC" id="2.1.1.186" evidence="1"/>
<dbReference type="EMBL" id="CP000308">
    <property type="protein sequence ID" value="ABG12470.1"/>
    <property type="molecule type" value="Genomic_DNA"/>
</dbReference>
<dbReference type="RefSeq" id="WP_002212119.1">
    <property type="nucleotide sequence ID" value="NZ_CP009906.1"/>
</dbReference>
<dbReference type="SMR" id="Q1CAQ2"/>
<dbReference type="GeneID" id="57977530"/>
<dbReference type="KEGG" id="ypa:YPA_0502"/>
<dbReference type="Proteomes" id="UP000001971">
    <property type="component" value="Chromosome"/>
</dbReference>
<dbReference type="GO" id="GO:0005737">
    <property type="term" value="C:cytoplasm"/>
    <property type="evidence" value="ECO:0007669"/>
    <property type="project" value="UniProtKB-SubCell"/>
</dbReference>
<dbReference type="GO" id="GO:0008757">
    <property type="term" value="F:S-adenosylmethionine-dependent methyltransferase activity"/>
    <property type="evidence" value="ECO:0007669"/>
    <property type="project" value="UniProtKB-UniRule"/>
</dbReference>
<dbReference type="GO" id="GO:0032259">
    <property type="term" value="P:methylation"/>
    <property type="evidence" value="ECO:0007669"/>
    <property type="project" value="UniProtKB-KW"/>
</dbReference>
<dbReference type="GO" id="GO:0006364">
    <property type="term" value="P:rRNA processing"/>
    <property type="evidence" value="ECO:0007669"/>
    <property type="project" value="UniProtKB-UniRule"/>
</dbReference>
<dbReference type="Gene3D" id="3.30.2300.20">
    <property type="match status" value="1"/>
</dbReference>
<dbReference type="Gene3D" id="3.30.70.2810">
    <property type="match status" value="1"/>
</dbReference>
<dbReference type="Gene3D" id="3.40.50.150">
    <property type="entry name" value="Vaccinia Virus protein VP39"/>
    <property type="match status" value="1"/>
</dbReference>
<dbReference type="HAMAP" id="MF_01551">
    <property type="entry name" value="23SrRNA_methyltr_M"/>
    <property type="match status" value="1"/>
</dbReference>
<dbReference type="InterPro" id="IPR040739">
    <property type="entry name" value="RlmM_FDX"/>
</dbReference>
<dbReference type="InterPro" id="IPR048646">
    <property type="entry name" value="RlmM_THUMP-like"/>
</dbReference>
<dbReference type="InterPro" id="IPR002877">
    <property type="entry name" value="RNA_MeTrfase_FtsJ_dom"/>
</dbReference>
<dbReference type="InterPro" id="IPR011224">
    <property type="entry name" value="rRNA_MeTrfase_M"/>
</dbReference>
<dbReference type="InterPro" id="IPR029063">
    <property type="entry name" value="SAM-dependent_MTases_sf"/>
</dbReference>
<dbReference type="NCBIfam" id="NF008734">
    <property type="entry name" value="PRK11760.1"/>
    <property type="match status" value="1"/>
</dbReference>
<dbReference type="PANTHER" id="PTHR37524">
    <property type="entry name" value="RIBOSOMAL RNA LARGE SUBUNIT METHYLTRANSFERASE M"/>
    <property type="match status" value="1"/>
</dbReference>
<dbReference type="PANTHER" id="PTHR37524:SF2">
    <property type="entry name" value="RIBOSOMAL RNA METHYLTRANSFERASE FTSJ DOMAIN-CONTAINING PROTEIN"/>
    <property type="match status" value="1"/>
</dbReference>
<dbReference type="Pfam" id="PF01728">
    <property type="entry name" value="FtsJ"/>
    <property type="match status" value="1"/>
</dbReference>
<dbReference type="Pfam" id="PF18125">
    <property type="entry name" value="RlmM_FDX"/>
    <property type="match status" value="1"/>
</dbReference>
<dbReference type="Pfam" id="PF21239">
    <property type="entry name" value="RLMM_N"/>
    <property type="match status" value="1"/>
</dbReference>
<dbReference type="PIRSF" id="PIRSF028774">
    <property type="entry name" value="UCP028774"/>
    <property type="match status" value="1"/>
</dbReference>
<dbReference type="SUPFAM" id="SSF53335">
    <property type="entry name" value="S-adenosyl-L-methionine-dependent methyltransferases"/>
    <property type="match status" value="1"/>
</dbReference>
<accession>Q1CAQ2</accession>
<name>RLMM_YERPA</name>
<sequence>MNNKIALYCRSGFEKECAAEITEKAAQLEIFGFARVKENSGYVLFECYQLEDADRLIREIPFREFIFARQMMVVGELLKDLPPEDRVSPIVGMLVGVIEKAGELRVEVADTNESKELLKFCRKLTVPLRSALREQKILSARENAHRPVVHVFFIAPGCCYVGYSYSNNNSPFYMGIPRLKFPSDAPSRSTLKLEEAFHVFIPADEWEERLASGMHAVDLGACPGGWTYQLVQRSMMIQAVDNGLMAQSLMDTGQVTHHRADGFKYEPTRSNIYWLVCDMVEKPTKVTQLITKWLVNGWCREAIFNLKLPMKKRYEEVVQNLAMMDEQLKENGINADIHAKQLYHDREEVTVHVRRIWSGAPGRRDERY</sequence>
<evidence type="ECO:0000255" key="1">
    <source>
        <dbReference type="HAMAP-Rule" id="MF_01551"/>
    </source>
</evidence>
<protein>
    <recommendedName>
        <fullName evidence="1">Ribosomal RNA large subunit methyltransferase M</fullName>
        <ecNumber evidence="1">2.1.1.186</ecNumber>
    </recommendedName>
    <alternativeName>
        <fullName evidence="1">23S rRNA (cytidine2498-2'-O)-methyltransferase</fullName>
    </alternativeName>
    <alternativeName>
        <fullName evidence="1">23S rRNA 2'-O-ribose methyltransferase RlmM</fullName>
    </alternativeName>
</protein>
<proteinExistence type="inferred from homology"/>
<keyword id="KW-0963">Cytoplasm</keyword>
<keyword id="KW-0489">Methyltransferase</keyword>
<keyword id="KW-0698">rRNA processing</keyword>
<keyword id="KW-0949">S-adenosyl-L-methionine</keyword>
<keyword id="KW-0808">Transferase</keyword>